<organism>
    <name type="scientific">Methanopyrus kandleri (strain AV19 / DSM 6324 / JCM 9639 / NBRC 100938)</name>
    <dbReference type="NCBI Taxonomy" id="190192"/>
    <lineage>
        <taxon>Archaea</taxon>
        <taxon>Methanobacteriati</taxon>
        <taxon>Methanobacteriota</taxon>
        <taxon>Methanomada group</taxon>
        <taxon>Methanopyri</taxon>
        <taxon>Methanopyrales</taxon>
        <taxon>Methanopyraceae</taxon>
        <taxon>Methanopyrus</taxon>
    </lineage>
</organism>
<comment type="catalytic activity">
    <reaction evidence="1">
        <text>5-amino-1-(5-phospho-D-ribosyl)imidazole-4-carboxylate + L-aspartate + ATP = (2S)-2-[5-amino-1-(5-phospho-beta-D-ribosyl)imidazole-4-carboxamido]succinate + ADP + phosphate + 2 H(+)</text>
        <dbReference type="Rhea" id="RHEA:22628"/>
        <dbReference type="ChEBI" id="CHEBI:15378"/>
        <dbReference type="ChEBI" id="CHEBI:29991"/>
        <dbReference type="ChEBI" id="CHEBI:30616"/>
        <dbReference type="ChEBI" id="CHEBI:43474"/>
        <dbReference type="ChEBI" id="CHEBI:58443"/>
        <dbReference type="ChEBI" id="CHEBI:77657"/>
        <dbReference type="ChEBI" id="CHEBI:456216"/>
        <dbReference type="EC" id="6.3.2.6"/>
    </reaction>
</comment>
<comment type="pathway">
    <text evidence="1">Purine metabolism; IMP biosynthesis via de novo pathway; 5-amino-1-(5-phospho-D-ribosyl)imidazole-4-carboxamide from 5-amino-1-(5-phospho-D-ribosyl)imidazole-4-carboxylate: step 1/2.</text>
</comment>
<comment type="similarity">
    <text evidence="1">Belongs to the SAICAR synthetase family.</text>
</comment>
<feature type="chain" id="PRO_0000100910" description="Phosphoribosylaminoimidazole-succinocarboxamide synthase">
    <location>
        <begin position="1"/>
        <end position="247"/>
    </location>
</feature>
<sequence length="247" mass="28405">MERGRLVYEGKAKSLYEHPEDENLLVMEFRDDITAFNMEKMDTVEGKGVYNCLISARLFEVLEDAGIPTHYVELADERRMVVERLDMFNLEVICRNMATGSLVERLPFEEGEKLDPPIVEFDYKSDEYGDPMVNMDHIRALGLATEEEVERMRELTLQVNEVLSEFLKDCDIILVDFKLEFGVNPDGEVVVGDEISPDTCRFWDAETEESLDKDIFRKDEGDVLAGYREAAERILRGDEEKLAMLPG</sequence>
<gene>
    <name evidence="1" type="primary">purC</name>
    <name type="ordered locus">MK0792</name>
</gene>
<evidence type="ECO:0000255" key="1">
    <source>
        <dbReference type="HAMAP-Rule" id="MF_00137"/>
    </source>
</evidence>
<reference key="1">
    <citation type="journal article" date="2002" name="Proc. Natl. Acad. Sci. U.S.A.">
        <title>The complete genome of hyperthermophile Methanopyrus kandleri AV19 and monophyly of archaeal methanogens.</title>
        <authorList>
            <person name="Slesarev A.I."/>
            <person name="Mezhevaya K.V."/>
            <person name="Makarova K.S."/>
            <person name="Polushin N.N."/>
            <person name="Shcherbinina O.V."/>
            <person name="Shakhova V.V."/>
            <person name="Belova G.I."/>
            <person name="Aravind L."/>
            <person name="Natale D.A."/>
            <person name="Rogozin I.B."/>
            <person name="Tatusov R.L."/>
            <person name="Wolf Y.I."/>
            <person name="Stetter K.O."/>
            <person name="Malykh A.G."/>
            <person name="Koonin E.V."/>
            <person name="Kozyavkin S.A."/>
        </authorList>
    </citation>
    <scope>NUCLEOTIDE SEQUENCE [LARGE SCALE GENOMIC DNA]</scope>
    <source>
        <strain>AV19 / DSM 6324 / JCM 9639 / NBRC 100938</strain>
    </source>
</reference>
<protein>
    <recommendedName>
        <fullName evidence="1">Phosphoribosylaminoimidazole-succinocarboxamide synthase</fullName>
        <ecNumber evidence="1">6.3.2.6</ecNumber>
    </recommendedName>
    <alternativeName>
        <fullName evidence="1">SAICAR synthetase</fullName>
    </alternativeName>
</protein>
<proteinExistence type="inferred from homology"/>
<name>PUR7_METKA</name>
<keyword id="KW-0067">ATP-binding</keyword>
<keyword id="KW-0436">Ligase</keyword>
<keyword id="KW-0547">Nucleotide-binding</keyword>
<keyword id="KW-0658">Purine biosynthesis</keyword>
<keyword id="KW-1185">Reference proteome</keyword>
<accession>Q8TX83</accession>
<dbReference type="EC" id="6.3.2.6" evidence="1"/>
<dbReference type="EMBL" id="AE009439">
    <property type="protein sequence ID" value="AAM02006.1"/>
    <property type="molecule type" value="Genomic_DNA"/>
</dbReference>
<dbReference type="RefSeq" id="WP_011019161.1">
    <property type="nucleotide sequence ID" value="NC_003551.1"/>
</dbReference>
<dbReference type="SMR" id="Q8TX83"/>
<dbReference type="FunCoup" id="Q8TX83">
    <property type="interactions" value="120"/>
</dbReference>
<dbReference type="STRING" id="190192.MK0792"/>
<dbReference type="PaxDb" id="190192-MK0792"/>
<dbReference type="EnsemblBacteria" id="AAM02006">
    <property type="protein sequence ID" value="AAM02006"/>
    <property type="gene ID" value="MK0792"/>
</dbReference>
<dbReference type="GeneID" id="1476893"/>
<dbReference type="KEGG" id="mka:MK0792"/>
<dbReference type="PATRIC" id="fig|190192.8.peg.833"/>
<dbReference type="HOGENOM" id="CLU_061495_2_0_2"/>
<dbReference type="InParanoid" id="Q8TX83"/>
<dbReference type="OrthoDB" id="10775at2157"/>
<dbReference type="UniPathway" id="UPA00074">
    <property type="reaction ID" value="UER00131"/>
</dbReference>
<dbReference type="Proteomes" id="UP000001826">
    <property type="component" value="Chromosome"/>
</dbReference>
<dbReference type="GO" id="GO:0005524">
    <property type="term" value="F:ATP binding"/>
    <property type="evidence" value="ECO:0007669"/>
    <property type="project" value="UniProtKB-KW"/>
</dbReference>
<dbReference type="GO" id="GO:0004639">
    <property type="term" value="F:phosphoribosylaminoimidazolesuccinocarboxamide synthase activity"/>
    <property type="evidence" value="ECO:0007669"/>
    <property type="project" value="UniProtKB-UniRule"/>
</dbReference>
<dbReference type="GO" id="GO:0006189">
    <property type="term" value="P:'de novo' IMP biosynthetic process"/>
    <property type="evidence" value="ECO:0007669"/>
    <property type="project" value="UniProtKB-UniRule"/>
</dbReference>
<dbReference type="GO" id="GO:0009236">
    <property type="term" value="P:cobalamin biosynthetic process"/>
    <property type="evidence" value="ECO:0007669"/>
    <property type="project" value="InterPro"/>
</dbReference>
<dbReference type="CDD" id="cd01415">
    <property type="entry name" value="SAICAR_synt_PurC"/>
    <property type="match status" value="1"/>
</dbReference>
<dbReference type="FunFam" id="3.30.470.20:FF:000006">
    <property type="entry name" value="Phosphoribosylaminoimidazole-succinocarboxamide synthase"/>
    <property type="match status" value="1"/>
</dbReference>
<dbReference type="Gene3D" id="3.30.470.20">
    <property type="entry name" value="ATP-grasp fold, B domain"/>
    <property type="match status" value="1"/>
</dbReference>
<dbReference type="Gene3D" id="3.30.200.20">
    <property type="entry name" value="Phosphorylase Kinase, domain 1"/>
    <property type="match status" value="1"/>
</dbReference>
<dbReference type="HAMAP" id="MF_00137">
    <property type="entry name" value="SAICAR_synth"/>
    <property type="match status" value="1"/>
</dbReference>
<dbReference type="InterPro" id="IPR028923">
    <property type="entry name" value="SAICAR_synt/ADE2_N"/>
</dbReference>
<dbReference type="InterPro" id="IPR033934">
    <property type="entry name" value="SAICAR_synt_PurC"/>
</dbReference>
<dbReference type="InterPro" id="IPR001636">
    <property type="entry name" value="SAICAR_synth"/>
</dbReference>
<dbReference type="InterPro" id="IPR050089">
    <property type="entry name" value="SAICAR_synthetase"/>
</dbReference>
<dbReference type="InterPro" id="IPR018236">
    <property type="entry name" value="SAICAR_synthetase_CS"/>
</dbReference>
<dbReference type="NCBIfam" id="TIGR00081">
    <property type="entry name" value="purC"/>
    <property type="match status" value="1"/>
</dbReference>
<dbReference type="PANTHER" id="PTHR43599">
    <property type="entry name" value="MULTIFUNCTIONAL PROTEIN ADE2"/>
    <property type="match status" value="1"/>
</dbReference>
<dbReference type="PANTHER" id="PTHR43599:SF3">
    <property type="entry name" value="SI:DKEY-6E2.2"/>
    <property type="match status" value="1"/>
</dbReference>
<dbReference type="Pfam" id="PF01259">
    <property type="entry name" value="SAICAR_synt"/>
    <property type="match status" value="1"/>
</dbReference>
<dbReference type="SUPFAM" id="SSF56104">
    <property type="entry name" value="SAICAR synthase-like"/>
    <property type="match status" value="1"/>
</dbReference>
<dbReference type="PROSITE" id="PS01057">
    <property type="entry name" value="SAICAR_SYNTHETASE_1"/>
    <property type="match status" value="1"/>
</dbReference>
<dbReference type="PROSITE" id="PS01058">
    <property type="entry name" value="SAICAR_SYNTHETASE_2"/>
    <property type="match status" value="1"/>
</dbReference>